<gene>
    <name type="primary">gnai1</name>
</gene>
<organism>
    <name type="scientific">Xenopus laevis</name>
    <name type="common">African clawed frog</name>
    <dbReference type="NCBI Taxonomy" id="8355"/>
    <lineage>
        <taxon>Eukaryota</taxon>
        <taxon>Metazoa</taxon>
        <taxon>Chordata</taxon>
        <taxon>Craniata</taxon>
        <taxon>Vertebrata</taxon>
        <taxon>Euteleostomi</taxon>
        <taxon>Amphibia</taxon>
        <taxon>Batrachia</taxon>
        <taxon>Anura</taxon>
        <taxon>Pipoidea</taxon>
        <taxon>Pipidae</taxon>
        <taxon>Xenopodinae</taxon>
        <taxon>Xenopus</taxon>
        <taxon>Xenopus</taxon>
    </lineage>
</organism>
<name>GNAI1_XENLA</name>
<protein>
    <recommendedName>
        <fullName>Guanine nucleotide-binding protein G(i) subunit alpha-1</fullName>
        <ecNumber evidence="2">3.6.5.-</ecNumber>
    </recommendedName>
    <alternativeName>
        <fullName>Adenylate cyclase-inhibiting G alpha protein</fullName>
    </alternativeName>
</protein>
<sequence>MGCTLSAEDKAAVERSKMIDRNLREDGEKAAREVKLLLLGAGESGKSTIVKQMKIIHEAGYSEEECKQYKAVVYSNTIQSIIAIIRAMGRLKIDFGDPSRADDARQLFVLAGAAEEGFMTAELAGVIKRLWKDGGVQACFNRSREYQLNDSAAYYLNDLDRIAQNSYIPTQQDVLRTRVKTTGIVETHFTFKDLHFKMFDVGGQRSERKKWIHCFEGVTAIIFCVALSDYDLVLAEDEEMNRMHESMKLFDSICNNKWFTDTSIILFLNKKDLFEEKIKRSPLTICYPEYPGSNTYEEAAAYIQCQFEDLNKRKDTKEIYTHFTCATDTKNVQFVFDAVTDVIIKNNLKDCGLF</sequence>
<accession>P27044</accession>
<accession>Q6GPC5</accession>
<feature type="initiator methionine" description="Removed" evidence="2">
    <location>
        <position position="1"/>
    </location>
</feature>
<feature type="chain" id="PRO_0000203676" description="Guanine nucleotide-binding protein G(i) subunit alpha-1">
    <location>
        <begin position="2"/>
        <end position="354"/>
    </location>
</feature>
<feature type="domain" description="G-alpha" evidence="3">
    <location>
        <begin position="32"/>
        <end position="354"/>
    </location>
</feature>
<feature type="region of interest" description="G1 motif" evidence="3">
    <location>
        <begin position="35"/>
        <end position="48"/>
    </location>
</feature>
<feature type="region of interest" description="G2 motif" evidence="3">
    <location>
        <begin position="173"/>
        <end position="181"/>
    </location>
</feature>
<feature type="region of interest" description="G3 motif" evidence="3">
    <location>
        <begin position="196"/>
        <end position="205"/>
    </location>
</feature>
<feature type="region of interest" description="G4 motif" evidence="3">
    <location>
        <begin position="265"/>
        <end position="272"/>
    </location>
</feature>
<feature type="region of interest" description="G5 motif" evidence="3">
    <location>
        <begin position="324"/>
        <end position="329"/>
    </location>
</feature>
<feature type="binding site" evidence="1">
    <location>
        <begin position="43"/>
        <end position="48"/>
    </location>
    <ligand>
        <name>GTP</name>
        <dbReference type="ChEBI" id="CHEBI:37565"/>
    </ligand>
</feature>
<feature type="binding site" evidence="1">
    <location>
        <position position="47"/>
    </location>
    <ligand>
        <name>Mg(2+)</name>
        <dbReference type="ChEBI" id="CHEBI:18420"/>
    </ligand>
</feature>
<feature type="binding site" evidence="1">
    <location>
        <begin position="150"/>
        <end position="151"/>
    </location>
    <ligand>
        <name>GTP</name>
        <dbReference type="ChEBI" id="CHEBI:37565"/>
    </ligand>
</feature>
<feature type="binding site" evidence="1">
    <location>
        <begin position="175"/>
        <end position="178"/>
    </location>
    <ligand>
        <name>GTP</name>
        <dbReference type="ChEBI" id="CHEBI:37565"/>
    </ligand>
</feature>
<feature type="binding site" evidence="1">
    <location>
        <position position="181"/>
    </location>
    <ligand>
        <name>Mg(2+)</name>
        <dbReference type="ChEBI" id="CHEBI:18420"/>
    </ligand>
</feature>
<feature type="binding site" evidence="1">
    <location>
        <begin position="200"/>
        <end position="204"/>
    </location>
    <ligand>
        <name>GTP</name>
        <dbReference type="ChEBI" id="CHEBI:37565"/>
    </ligand>
</feature>
<feature type="binding site" evidence="1">
    <location>
        <begin position="269"/>
        <end position="272"/>
    </location>
    <ligand>
        <name>GTP</name>
        <dbReference type="ChEBI" id="CHEBI:37565"/>
    </ligand>
</feature>
<feature type="binding site" evidence="1">
    <location>
        <position position="326"/>
    </location>
    <ligand>
        <name>GTP</name>
        <dbReference type="ChEBI" id="CHEBI:37565"/>
    </ligand>
</feature>
<feature type="lipid moiety-binding region" description="N-myristoyl glycine" evidence="2">
    <location>
        <position position="2"/>
    </location>
</feature>
<feature type="lipid moiety-binding region" description="S-palmitoyl cysteine" evidence="1">
    <location>
        <position position="3"/>
    </location>
</feature>
<reference key="1">
    <citation type="journal article" date="1990" name="FEBS Lett.">
        <title>Molecular cloning and sequence determination of four different cDNA species coding for alpha-subunits of G proteins from Xenopus laevis oocytes.</title>
        <authorList>
            <person name="Olate J."/>
            <person name="Martinez S."/>
            <person name="Purcell P."/>
            <person name="Jorquera H."/>
            <person name="Codina J."/>
            <person name="Birnbaumer L."/>
            <person name="Allende J.E."/>
        </authorList>
    </citation>
    <scope>NUCLEOTIDE SEQUENCE [MRNA]</scope>
    <source>
        <tissue>Oocyte</tissue>
    </source>
</reference>
<reference key="2">
    <citation type="submission" date="2004-06" db="EMBL/GenBank/DDBJ databases">
        <authorList>
            <consortium name="NIH - Xenopus Gene Collection (XGC) project"/>
        </authorList>
    </citation>
    <scope>NUCLEOTIDE SEQUENCE [LARGE SCALE MRNA]</scope>
    <source>
        <tissue>Embryo</tissue>
    </source>
</reference>
<evidence type="ECO:0000250" key="1">
    <source>
        <dbReference type="UniProtKB" id="P10824"/>
    </source>
</evidence>
<evidence type="ECO:0000250" key="2">
    <source>
        <dbReference type="UniProtKB" id="P63096"/>
    </source>
</evidence>
<evidence type="ECO:0000255" key="3">
    <source>
        <dbReference type="PROSITE-ProRule" id="PRU01230"/>
    </source>
</evidence>
<evidence type="ECO:0000305" key="4"/>
<dbReference type="EC" id="3.6.5.-" evidence="2"/>
<dbReference type="EMBL" id="X56089">
    <property type="protein sequence ID" value="CAA39569.1"/>
    <property type="molecule type" value="mRNA"/>
</dbReference>
<dbReference type="EMBL" id="BC042243">
    <property type="protein sequence ID" value="AAH42243.1"/>
    <property type="molecule type" value="mRNA"/>
</dbReference>
<dbReference type="EMBL" id="BC073216">
    <property type="protein sequence ID" value="AAH73216.1"/>
    <property type="molecule type" value="mRNA"/>
</dbReference>
<dbReference type="PIR" id="S11045">
    <property type="entry name" value="RGXLI1"/>
</dbReference>
<dbReference type="RefSeq" id="NP_001080342.1">
    <property type="nucleotide sequence ID" value="NM_001086873.1"/>
</dbReference>
<dbReference type="RefSeq" id="NP_001084365.1">
    <property type="nucleotide sequence ID" value="NM_001090896.1"/>
</dbReference>
<dbReference type="SMR" id="P27044"/>
<dbReference type="DNASU" id="380034"/>
<dbReference type="DNASU" id="399463"/>
<dbReference type="GeneID" id="380034"/>
<dbReference type="GeneID" id="399463"/>
<dbReference type="KEGG" id="xla:380034"/>
<dbReference type="KEGG" id="xla:399463"/>
<dbReference type="AGR" id="Xenbase:XB-GENE-6253889"/>
<dbReference type="CTD" id="380034"/>
<dbReference type="CTD" id="399463"/>
<dbReference type="Xenbase" id="XB-GENE-6253889">
    <property type="gene designation" value="gnai1.S"/>
</dbReference>
<dbReference type="OrthoDB" id="5817230at2759"/>
<dbReference type="Proteomes" id="UP000186698">
    <property type="component" value="Chromosome 3L"/>
</dbReference>
<dbReference type="Proteomes" id="UP000186698">
    <property type="component" value="Chromosome 3S"/>
</dbReference>
<dbReference type="Bgee" id="380034">
    <property type="expression patterns" value="Expressed in egg cell and 19 other cell types or tissues"/>
</dbReference>
<dbReference type="GO" id="GO:0005938">
    <property type="term" value="C:cell cortex"/>
    <property type="evidence" value="ECO:0000250"/>
    <property type="project" value="UniProtKB"/>
</dbReference>
<dbReference type="GO" id="GO:0005813">
    <property type="term" value="C:centrosome"/>
    <property type="evidence" value="ECO:0000250"/>
    <property type="project" value="UniProtKB"/>
</dbReference>
<dbReference type="GO" id="GO:0005737">
    <property type="term" value="C:cytoplasm"/>
    <property type="evidence" value="ECO:0000250"/>
    <property type="project" value="UniProtKB"/>
</dbReference>
<dbReference type="GO" id="GO:0005834">
    <property type="term" value="C:heterotrimeric G-protein complex"/>
    <property type="evidence" value="ECO:0000318"/>
    <property type="project" value="GO_Central"/>
</dbReference>
<dbReference type="GO" id="GO:0030496">
    <property type="term" value="C:midbody"/>
    <property type="evidence" value="ECO:0000250"/>
    <property type="project" value="UniProtKB"/>
</dbReference>
<dbReference type="GO" id="GO:0005634">
    <property type="term" value="C:nucleus"/>
    <property type="evidence" value="ECO:0007669"/>
    <property type="project" value="UniProtKB-SubCell"/>
</dbReference>
<dbReference type="GO" id="GO:0005886">
    <property type="term" value="C:plasma membrane"/>
    <property type="evidence" value="ECO:0000250"/>
    <property type="project" value="UniProtKB"/>
</dbReference>
<dbReference type="GO" id="GO:0001664">
    <property type="term" value="F:G protein-coupled receptor binding"/>
    <property type="evidence" value="ECO:0000250"/>
    <property type="project" value="UniProtKB"/>
</dbReference>
<dbReference type="GO" id="GO:0031821">
    <property type="term" value="F:G protein-coupled serotonin receptor binding"/>
    <property type="evidence" value="ECO:0000318"/>
    <property type="project" value="GO_Central"/>
</dbReference>
<dbReference type="GO" id="GO:0031683">
    <property type="term" value="F:G-protein beta/gamma-subunit complex binding"/>
    <property type="evidence" value="ECO:0000318"/>
    <property type="project" value="GO_Central"/>
</dbReference>
<dbReference type="GO" id="GO:0019003">
    <property type="term" value="F:GDP binding"/>
    <property type="evidence" value="ECO:0000250"/>
    <property type="project" value="UniProtKB"/>
</dbReference>
<dbReference type="GO" id="GO:0005525">
    <property type="term" value="F:GTP binding"/>
    <property type="evidence" value="ECO:0000250"/>
    <property type="project" value="UniProtKB"/>
</dbReference>
<dbReference type="GO" id="GO:0003924">
    <property type="term" value="F:GTPase activity"/>
    <property type="evidence" value="ECO:0000250"/>
    <property type="project" value="UniProtKB"/>
</dbReference>
<dbReference type="GO" id="GO:0000287">
    <property type="term" value="F:magnesium ion binding"/>
    <property type="evidence" value="ECO:0000250"/>
    <property type="project" value="UniProtKB"/>
</dbReference>
<dbReference type="GO" id="GO:0007188">
    <property type="term" value="P:adenylate cyclase-modulating G protein-coupled receptor signaling pathway"/>
    <property type="evidence" value="ECO:0000250"/>
    <property type="project" value="UniProtKB"/>
</dbReference>
<dbReference type="GO" id="GO:0051301">
    <property type="term" value="P:cell division"/>
    <property type="evidence" value="ECO:0000250"/>
    <property type="project" value="UniProtKB"/>
</dbReference>
<dbReference type="GO" id="GO:1904322">
    <property type="term" value="P:cellular response to forskolin"/>
    <property type="evidence" value="ECO:0000250"/>
    <property type="project" value="UniProtKB"/>
</dbReference>
<dbReference type="GO" id="GO:0007186">
    <property type="term" value="P:G protein-coupled receptor signaling pathway"/>
    <property type="evidence" value="ECO:0000250"/>
    <property type="project" value="UniProtKB"/>
</dbReference>
<dbReference type="GO" id="GO:1904778">
    <property type="term" value="P:positive regulation of protein localization to cell cortex"/>
    <property type="evidence" value="ECO:0000250"/>
    <property type="project" value="UniProtKB"/>
</dbReference>
<dbReference type="GO" id="GO:0060236">
    <property type="term" value="P:regulation of mitotic spindle organization"/>
    <property type="evidence" value="ECO:0000250"/>
    <property type="project" value="UniProtKB"/>
</dbReference>
<dbReference type="CDD" id="cd00066">
    <property type="entry name" value="G-alpha"/>
    <property type="match status" value="1"/>
</dbReference>
<dbReference type="FunFam" id="1.10.400.10:FF:000001">
    <property type="entry name" value="Guanine nucleotide-binding protein G(I) subunit alpha"/>
    <property type="match status" value="1"/>
</dbReference>
<dbReference type="FunFam" id="3.40.50.300:FF:002487">
    <property type="entry name" value="Guanine nucleotide-binding protein G(i) subunit alpha-1"/>
    <property type="match status" value="1"/>
</dbReference>
<dbReference type="FunFam" id="3.40.50.300:FF:003559">
    <property type="entry name" value="Guanine nucleotide-binding protein G(i) subunit alpha-1"/>
    <property type="match status" value="1"/>
</dbReference>
<dbReference type="Gene3D" id="1.10.400.10">
    <property type="entry name" value="GI Alpha 1, domain 2-like"/>
    <property type="match status" value="1"/>
</dbReference>
<dbReference type="Gene3D" id="3.40.50.300">
    <property type="entry name" value="P-loop containing nucleotide triphosphate hydrolases"/>
    <property type="match status" value="1"/>
</dbReference>
<dbReference type="InterPro" id="IPR001408">
    <property type="entry name" value="Gprotein_alpha_I"/>
</dbReference>
<dbReference type="InterPro" id="IPR001019">
    <property type="entry name" value="Gprotein_alpha_su"/>
</dbReference>
<dbReference type="InterPro" id="IPR011025">
    <property type="entry name" value="GproteinA_insert"/>
</dbReference>
<dbReference type="InterPro" id="IPR027417">
    <property type="entry name" value="P-loop_NTPase"/>
</dbReference>
<dbReference type="PANTHER" id="PTHR10218">
    <property type="entry name" value="GTP-BINDING PROTEIN ALPHA SUBUNIT"/>
    <property type="match status" value="1"/>
</dbReference>
<dbReference type="PANTHER" id="PTHR10218:SF359">
    <property type="entry name" value="GUANINE NUCLEOTIDE-BINDING PROTEIN G(I) SUBUNIT ALPHA-1"/>
    <property type="match status" value="1"/>
</dbReference>
<dbReference type="Pfam" id="PF00503">
    <property type="entry name" value="G-alpha"/>
    <property type="match status" value="1"/>
</dbReference>
<dbReference type="PRINTS" id="PR00318">
    <property type="entry name" value="GPROTEINA"/>
</dbReference>
<dbReference type="PRINTS" id="PR00441">
    <property type="entry name" value="GPROTEINAI"/>
</dbReference>
<dbReference type="SMART" id="SM00275">
    <property type="entry name" value="G_alpha"/>
    <property type="match status" value="1"/>
</dbReference>
<dbReference type="SUPFAM" id="SSF52540">
    <property type="entry name" value="P-loop containing nucleoside triphosphate hydrolases"/>
    <property type="match status" value="1"/>
</dbReference>
<dbReference type="SUPFAM" id="SSF47895">
    <property type="entry name" value="Transducin (alpha subunit), insertion domain"/>
    <property type="match status" value="1"/>
</dbReference>
<dbReference type="PROSITE" id="PS51882">
    <property type="entry name" value="G_ALPHA"/>
    <property type="match status" value="1"/>
</dbReference>
<comment type="function">
    <text evidence="1 2">Guanine nucleotide-binding proteins (G proteins) function as transducers downstream of G protein-coupled receptors (GPCRs) in numerous signaling cascades. The alpha chain contains the guanine nucleotide binding site and alternates between an active, GTP-bound state and an inactive, GDP-bound state. Signaling by an activated GPCR promotes GDP release and GTP binding. The alpha subunit has a low GTPase activity that converts bound GTP to GDP, thereby terminating the signal. Both GDP release and GTP hydrolysis are modulated by numerous regulatory proteins (By similarity). Signaling is mediated via effector proteins, such as adenylate cyclase. Inhibits adenylate cyclase activity, leading to decreased intracellular cAMP levels (By similarity). Required for cortical dynein-dynactin complex recruitment during metaphase (By similarity).</text>
</comment>
<comment type="catalytic activity">
    <reaction evidence="2">
        <text>GTP + H2O = GDP + phosphate + H(+)</text>
        <dbReference type="Rhea" id="RHEA:19669"/>
        <dbReference type="ChEBI" id="CHEBI:15377"/>
        <dbReference type="ChEBI" id="CHEBI:15378"/>
        <dbReference type="ChEBI" id="CHEBI:37565"/>
        <dbReference type="ChEBI" id="CHEBI:43474"/>
        <dbReference type="ChEBI" id="CHEBI:58189"/>
    </reaction>
    <physiologicalReaction direction="left-to-right" evidence="2">
        <dbReference type="Rhea" id="RHEA:19670"/>
    </physiologicalReaction>
</comment>
<comment type="subunit">
    <text evidence="1 2">Heterotrimeric G proteins are composed of 3 units; alpha, beta and gamma. The alpha chain contains the guanine nucleotide binding site. Part of a spindle orientation complex. Identified in complex with the beta subunit GNB1 and the gamma subunit GNG1. Identified in complex with the beta subunit GNB1 and the gamma subunit GNG2. GTP binding causes dissociation of the heterotrimer, liberating the individual subunits so that they can interact with downstream effector proteins (By similarity).</text>
</comment>
<comment type="subcellular location">
    <subcellularLocation>
        <location evidence="1">Nucleus</location>
    </subcellularLocation>
    <subcellularLocation>
        <location evidence="1">Cytoplasm</location>
    </subcellularLocation>
    <subcellularLocation>
        <location evidence="1">Cell membrane</location>
        <topology evidence="1">Peripheral membrane protein</topology>
        <orientation evidence="1">Cytoplasmic side</orientation>
    </subcellularLocation>
    <subcellularLocation>
        <location evidence="1">Cytoplasm</location>
        <location evidence="1">Cytoskeleton</location>
        <location evidence="1">Microtubule organizing center</location>
        <location evidence="1">Centrosome</location>
    </subcellularLocation>
    <subcellularLocation>
        <location evidence="2">Cytoplasm</location>
        <location evidence="2">Cell cortex</location>
    </subcellularLocation>
    <subcellularLocation>
        <location evidence="1">Membrane</location>
        <topology evidence="1">Lipid-anchor</topology>
    </subcellularLocation>
</comment>
<comment type="PTM">
    <text evidence="1">Myristoylation at Gly-2 is required for membrane anchoring before palmitoylation.</text>
</comment>
<comment type="PTM">
    <text evidence="1">Palmitoylation at Cys-3 varies with membrane lipid composition.</text>
</comment>
<comment type="similarity">
    <text evidence="4">Belongs to the G-alpha family. G(i/o/t/z) subfamily.</text>
</comment>
<proteinExistence type="evidence at transcript level"/>
<keyword id="KW-0131">Cell cycle</keyword>
<keyword id="KW-0132">Cell division</keyword>
<keyword id="KW-1003">Cell membrane</keyword>
<keyword id="KW-0963">Cytoplasm</keyword>
<keyword id="KW-0206">Cytoskeleton</keyword>
<keyword id="KW-0342">GTP-binding</keyword>
<keyword id="KW-0378">Hydrolase</keyword>
<keyword id="KW-0449">Lipoprotein</keyword>
<keyword id="KW-0460">Magnesium</keyword>
<keyword id="KW-0472">Membrane</keyword>
<keyword id="KW-0479">Metal-binding</keyword>
<keyword id="KW-0498">Mitosis</keyword>
<keyword id="KW-0519">Myristate</keyword>
<keyword id="KW-0547">Nucleotide-binding</keyword>
<keyword id="KW-0539">Nucleus</keyword>
<keyword id="KW-0564">Palmitate</keyword>
<keyword id="KW-1185">Reference proteome</keyword>
<keyword id="KW-0807">Transducer</keyword>
<keyword id="KW-0813">Transport</keyword>